<reference key="1">
    <citation type="journal article" date="2007" name="Proc. Natl. Acad. Sci. U.S.A.">
        <title>Analysis of 81 genes from 64 plastid genomes resolves relationships in angiosperms and identifies genome-scale evolutionary patterns.</title>
        <authorList>
            <person name="Jansen R.K."/>
            <person name="Cai Z."/>
            <person name="Raubeson L.A."/>
            <person name="Daniell H."/>
            <person name="dePamphilis C.W."/>
            <person name="Leebens-Mack J."/>
            <person name="Muller K.F."/>
            <person name="Guisinger-Bellian M."/>
            <person name="Haberle R.C."/>
            <person name="Hansen A.K."/>
            <person name="Chumley T.W."/>
            <person name="Lee S.B."/>
            <person name="Peery R."/>
            <person name="McNeal J.R."/>
            <person name="Kuehl J.V."/>
            <person name="Boore J.L."/>
        </authorList>
    </citation>
    <scope>NUCLEOTIDE SEQUENCE [GENOMIC DNA]</scope>
</reference>
<reference key="2">
    <citation type="submission" date="2007-11" db="EMBL/GenBank/DDBJ databases">
        <title>The complete chloroplast genome of Acorus americanus.</title>
        <authorList>
            <person name="Peery R.M."/>
            <person name="Chumley T.W."/>
            <person name="Kuehl J.V."/>
            <person name="Boore J.L."/>
            <person name="Raubeson L.A."/>
        </authorList>
    </citation>
    <scope>NUCLEOTIDE SEQUENCE [LARGE SCALE GENOMIC DNA]</scope>
</reference>
<comment type="function">
    <text evidence="1">NDH shuttles electrons from NAD(P)H:plastoquinone, via FMN and iron-sulfur (Fe-S) centers, to quinones in the photosynthetic chain and possibly in a chloroplast respiratory chain. The immediate electron acceptor for the enzyme in this species is believed to be plastoquinone. Couples the redox reaction to proton translocation, and thus conserves the redox energy in a proton gradient (By similarity).</text>
</comment>
<comment type="catalytic activity">
    <reaction>
        <text>a plastoquinone + NADH + (n+1) H(+)(in) = a plastoquinol + NAD(+) + n H(+)(out)</text>
        <dbReference type="Rhea" id="RHEA:42608"/>
        <dbReference type="Rhea" id="RHEA-COMP:9561"/>
        <dbReference type="Rhea" id="RHEA-COMP:9562"/>
        <dbReference type="ChEBI" id="CHEBI:15378"/>
        <dbReference type="ChEBI" id="CHEBI:17757"/>
        <dbReference type="ChEBI" id="CHEBI:57540"/>
        <dbReference type="ChEBI" id="CHEBI:57945"/>
        <dbReference type="ChEBI" id="CHEBI:62192"/>
    </reaction>
</comment>
<comment type="catalytic activity">
    <reaction>
        <text>a plastoquinone + NADPH + (n+1) H(+)(in) = a plastoquinol + NADP(+) + n H(+)(out)</text>
        <dbReference type="Rhea" id="RHEA:42612"/>
        <dbReference type="Rhea" id="RHEA-COMP:9561"/>
        <dbReference type="Rhea" id="RHEA-COMP:9562"/>
        <dbReference type="ChEBI" id="CHEBI:15378"/>
        <dbReference type="ChEBI" id="CHEBI:17757"/>
        <dbReference type="ChEBI" id="CHEBI:57783"/>
        <dbReference type="ChEBI" id="CHEBI:58349"/>
        <dbReference type="ChEBI" id="CHEBI:62192"/>
    </reaction>
</comment>
<comment type="subunit">
    <text evidence="1">NDH is composed of at least 16 different subunits, 5 of which are encoded in the nucleus.</text>
</comment>
<comment type="subcellular location">
    <subcellularLocation>
        <location evidence="1">Plastid</location>
        <location evidence="1">Chloroplast thylakoid membrane</location>
        <topology evidence="1">Multi-pass membrane protein</topology>
    </subcellularLocation>
</comment>
<comment type="similarity">
    <text evidence="3">Belongs to the complex I subunit 6 family.</text>
</comment>
<keyword id="KW-0150">Chloroplast</keyword>
<keyword id="KW-0472">Membrane</keyword>
<keyword id="KW-0520">NAD</keyword>
<keyword id="KW-0521">NADP</keyword>
<keyword id="KW-0934">Plastid</keyword>
<keyword id="KW-0618">Plastoquinone</keyword>
<keyword id="KW-0874">Quinone</keyword>
<keyword id="KW-0793">Thylakoid</keyword>
<keyword id="KW-1278">Translocase</keyword>
<keyword id="KW-0812">Transmembrane</keyword>
<keyword id="KW-1133">Transmembrane helix</keyword>
<keyword id="KW-0813">Transport</keyword>
<sequence>MDLPGPIHDVLLVFLGSGLILGGLGVVLLTNPIYSAFSLGLVLVCISLFYILSNSYFVAAAQLLIYVGAVNVLIIFAVMFMNGSDYSNDFYLWTVGDGVTSLVCTSILFSLITTILDTSWYGIIWNTGSNQIVEQDLTSNVQQIGIHLSTDFYLPFELVSIILLVALIGAITMARQY</sequence>
<organism>
    <name type="scientific">Acorus calamus var. americanus</name>
    <name type="common">American sweet flag</name>
    <name type="synonym">Acorus americanus</name>
    <dbReference type="NCBI Taxonomy" id="263995"/>
    <lineage>
        <taxon>Eukaryota</taxon>
        <taxon>Viridiplantae</taxon>
        <taxon>Streptophyta</taxon>
        <taxon>Embryophyta</taxon>
        <taxon>Tracheophyta</taxon>
        <taxon>Spermatophyta</taxon>
        <taxon>Magnoliopsida</taxon>
        <taxon>Liliopsida</taxon>
        <taxon>Acoraceae</taxon>
        <taxon>Acorus</taxon>
    </lineage>
</organism>
<feature type="chain" id="PRO_0000360221" description="NAD(P)H-quinone oxidoreductase subunit 6, chloroplastic">
    <location>
        <begin position="1"/>
        <end position="177"/>
    </location>
</feature>
<feature type="transmembrane region" description="Helical" evidence="2">
    <location>
        <begin position="10"/>
        <end position="30"/>
    </location>
</feature>
<feature type="transmembrane region" description="Helical" evidence="2">
    <location>
        <begin position="32"/>
        <end position="52"/>
    </location>
</feature>
<feature type="transmembrane region" description="Helical" evidence="2">
    <location>
        <begin position="61"/>
        <end position="81"/>
    </location>
</feature>
<feature type="transmembrane region" description="Helical" evidence="2">
    <location>
        <begin position="90"/>
        <end position="112"/>
    </location>
</feature>
<feature type="transmembrane region" description="Helical" evidence="2">
    <location>
        <begin position="152"/>
        <end position="172"/>
    </location>
</feature>
<protein>
    <recommendedName>
        <fullName>NAD(P)H-quinone oxidoreductase subunit 6, chloroplastic</fullName>
        <ecNumber>7.1.1.-</ecNumber>
    </recommendedName>
    <alternativeName>
        <fullName>NAD(P)H dehydrogenase subunit 6</fullName>
    </alternativeName>
    <alternativeName>
        <fullName>NADH-plastoquinone oxidoreductase subunit 6</fullName>
    </alternativeName>
</protein>
<geneLocation type="chloroplast"/>
<evidence type="ECO:0000250" key="1"/>
<evidence type="ECO:0000255" key="2"/>
<evidence type="ECO:0000305" key="3"/>
<proteinExistence type="inferred from homology"/>
<accession>A9LYF3</accession>
<accession>A9QAR3</accession>
<name>NU6C_ACOCI</name>
<gene>
    <name type="primary">ndhG</name>
</gene>
<dbReference type="EC" id="7.1.1.-"/>
<dbReference type="EMBL" id="EU016715">
    <property type="protein sequence ID" value="ABU85156.1"/>
    <property type="molecule type" value="Genomic_DNA"/>
</dbReference>
<dbReference type="EMBL" id="EU273602">
    <property type="protein sequence ID" value="ABX38796.1"/>
    <property type="molecule type" value="Genomic_DNA"/>
</dbReference>
<dbReference type="RefSeq" id="YP_001586234.1">
    <property type="nucleotide sequence ID" value="NC_010093.1"/>
</dbReference>
<dbReference type="SMR" id="A9LYF3"/>
<dbReference type="GeneID" id="5777758"/>
<dbReference type="GO" id="GO:0009535">
    <property type="term" value="C:chloroplast thylakoid membrane"/>
    <property type="evidence" value="ECO:0007669"/>
    <property type="project" value="UniProtKB-SubCell"/>
</dbReference>
<dbReference type="GO" id="GO:0008137">
    <property type="term" value="F:NADH dehydrogenase (ubiquinone) activity"/>
    <property type="evidence" value="ECO:0007669"/>
    <property type="project" value="InterPro"/>
</dbReference>
<dbReference type="GO" id="GO:0048038">
    <property type="term" value="F:quinone binding"/>
    <property type="evidence" value="ECO:0007669"/>
    <property type="project" value="UniProtKB-KW"/>
</dbReference>
<dbReference type="FunFam" id="1.20.120.1200:FF:000002">
    <property type="entry name" value="NAD(P)H-quinone oxidoreductase subunit 6, chloroplastic"/>
    <property type="match status" value="1"/>
</dbReference>
<dbReference type="Gene3D" id="1.20.120.1200">
    <property type="entry name" value="NADH-ubiquinone/plastoquinone oxidoreductase chain 6, subunit NuoJ"/>
    <property type="match status" value="1"/>
</dbReference>
<dbReference type="InterPro" id="IPR050290">
    <property type="entry name" value="NAD(P)H-Q_Oxidoreduct_6"/>
</dbReference>
<dbReference type="InterPro" id="IPR001457">
    <property type="entry name" value="NADH_UbQ/plastoQ_OxRdtase_su6"/>
</dbReference>
<dbReference type="InterPro" id="IPR042106">
    <property type="entry name" value="Nuo/plastoQ_OxRdtase_6_NuoJ"/>
</dbReference>
<dbReference type="PANTHER" id="PTHR48479">
    <property type="entry name" value="NAD(P)H-QUINONE OXIDOREDUCTASE SUBUNIT 6, CHLOROPLASTIC"/>
    <property type="match status" value="1"/>
</dbReference>
<dbReference type="PANTHER" id="PTHR48479:SF1">
    <property type="entry name" value="NAD(P)H-QUINONE OXIDOREDUCTASE SUBUNIT 6, CHLOROPLASTIC"/>
    <property type="match status" value="1"/>
</dbReference>
<dbReference type="Pfam" id="PF00499">
    <property type="entry name" value="Oxidored_q3"/>
    <property type="match status" value="1"/>
</dbReference>